<protein>
    <recommendedName>
        <fullName evidence="4">Chassatide C2</fullName>
    </recommendedName>
    <alternativeName>
        <fullName evidence="4">Cyclotide chaC2</fullName>
    </alternativeName>
</protein>
<name>CYC2_CHACT</name>
<keyword id="KW-0204">Cytolysis</keyword>
<keyword id="KW-0903">Direct protein sequencing</keyword>
<keyword id="KW-1015">Disulfide bond</keyword>
<keyword id="KW-0960">Knottin</keyword>
<keyword id="KW-0558">Oxidation</keyword>
<keyword id="KW-0611">Plant defense</keyword>
<keyword id="KW-0732">Signal</keyword>
<proteinExistence type="evidence at protein level"/>
<accession>I0B6F2</accession>
<dbReference type="EMBL" id="JQ309962">
    <property type="protein sequence ID" value="AFH57352.1"/>
    <property type="molecule type" value="mRNA"/>
</dbReference>
<dbReference type="GO" id="GO:0006952">
    <property type="term" value="P:defense response"/>
    <property type="evidence" value="ECO:0007669"/>
    <property type="project" value="UniProtKB-KW"/>
</dbReference>
<dbReference type="GO" id="GO:0031640">
    <property type="term" value="P:killing of cells of another organism"/>
    <property type="evidence" value="ECO:0007669"/>
    <property type="project" value="UniProtKB-KW"/>
</dbReference>
<dbReference type="InterPro" id="IPR005535">
    <property type="entry name" value="Cyclotide"/>
</dbReference>
<dbReference type="InterPro" id="IPR012323">
    <property type="entry name" value="Cyclotide_bracelet_CS"/>
</dbReference>
<dbReference type="InterPro" id="IPR036146">
    <property type="entry name" value="Cyclotide_sf"/>
</dbReference>
<dbReference type="Pfam" id="PF03784">
    <property type="entry name" value="Cyclotide"/>
    <property type="match status" value="1"/>
</dbReference>
<dbReference type="SUPFAM" id="SSF57038">
    <property type="entry name" value="Cyclotides"/>
    <property type="match status" value="1"/>
</dbReference>
<dbReference type="PROSITE" id="PS51052">
    <property type="entry name" value="CYCLOTIDE"/>
    <property type="match status" value="1"/>
</dbReference>
<dbReference type="PROSITE" id="PS60008">
    <property type="entry name" value="CYCLOTIDE_BRACELET"/>
    <property type="match status" value="1"/>
</dbReference>
<comment type="function">
    <text evidence="1 2 3">Chassatide C2: Probably participates in a plant defense mechanism (Probable). Has no activity against bacteria up to a concentration of 80 uM (PubMed:22467870). Has cytotoxic but no hemolytic activity (PubMed:22467870).</text>
</comment>
<comment type="function">
    <text evidence="1 2 3">Chassatide C2A: Probably participates in a plant defense mechanism (Probable). Has no activity against bacteria up to a concentration of 80 uM (PubMed:22467870). Has no cytotoxic and no hemolytic activity (PubMed:22467870).</text>
</comment>
<comment type="tissue specificity">
    <text evidence="3">Expressed in fruit, pedicel and stem but not in leaf and root (at protein level).</text>
</comment>
<comment type="domain">
    <text evidence="5">The presence of a 'disulfide through disulfide knot' structurally defines this protein as a knottin.</text>
</comment>
<comment type="PTM">
    <text evidence="2">This is a cyclic peptide.</text>
</comment>
<comment type="mass spectrometry" mass="3282.0" method="MALDI" evidence="3"/>
<comment type="mass spectrometry" mass="3298.0" method="MALDI" evidence="3">
    <text>Chassatide chaC2A.</text>
</comment>
<comment type="similarity">
    <text evidence="2">Belongs to the cyclotide family. Bracelet subfamily.</text>
</comment>
<sequence length="77" mass="8502">MAKFANYLMLFLLVASLVMLEAQSSDTIKVPDLGKRLLMNRDPNGIPCAESCVWIPCTITALMGCSCKNNVCYNNEL</sequence>
<reference evidence="7" key="1">
    <citation type="journal article" date="2012" name="J. Biol. Chem.">
        <title>Novel Cyclotides and Uncyclotides with Highly Shortened Precursors from Chassalia chartacea and Effects of Methionine Oxidation on Bioactivities.</title>
        <authorList>
            <person name="Nguyen G.K."/>
            <person name="Lim W.H."/>
            <person name="Nguyen P.Q."/>
            <person name="Tam J.P."/>
        </authorList>
    </citation>
    <scope>NUCLEOTIDE SEQUENCE [MRNA]</scope>
    <scope>PROTEIN SEQUENCE OF 45-75</scope>
    <scope>FUNCTION</scope>
    <scope>TISSUE SPECIFICITY</scope>
    <scope>MASS SPECTROMETRY</scope>
    <scope>IDENTIFICATION BY MASS SPECTROMETRY</scope>
    <scope>OXIDATION AT MET-63</scope>
</reference>
<evidence type="ECO:0000255" key="1"/>
<evidence type="ECO:0000255" key="2">
    <source>
        <dbReference type="PROSITE-ProRule" id="PRU00395"/>
    </source>
</evidence>
<evidence type="ECO:0000269" key="3">
    <source>
    </source>
</evidence>
<evidence type="ECO:0000303" key="4">
    <source>
    </source>
</evidence>
<evidence type="ECO:0000305" key="5"/>
<evidence type="ECO:0000305" key="6">
    <source>
    </source>
</evidence>
<evidence type="ECO:0000312" key="7">
    <source>
        <dbReference type="EMBL" id="AFH57352.1"/>
    </source>
</evidence>
<organism>
    <name type="scientific">Chassalia chartacea</name>
    <name type="common">Chassalia curviflora</name>
    <dbReference type="NCBI Taxonomy" id="510798"/>
    <lineage>
        <taxon>Eukaryota</taxon>
        <taxon>Viridiplantae</taxon>
        <taxon>Streptophyta</taxon>
        <taxon>Embryophyta</taxon>
        <taxon>Tracheophyta</taxon>
        <taxon>Spermatophyta</taxon>
        <taxon>Magnoliopsida</taxon>
        <taxon>eudicotyledons</taxon>
        <taxon>Gunneridae</taxon>
        <taxon>Pentapetalae</taxon>
        <taxon>asterids</taxon>
        <taxon>lamiids</taxon>
        <taxon>Gentianales</taxon>
        <taxon>Rubiaceae</taxon>
        <taxon>Rubioideae</taxon>
        <taxon>Palicoureeae</taxon>
        <taxon>Chassalia</taxon>
    </lineage>
</organism>
<feature type="signal peptide" evidence="1">
    <location>
        <begin position="1"/>
        <end position="24"/>
    </location>
</feature>
<feature type="propeptide" id="PRO_0000440220" description="Removed in mature form" evidence="6">
    <location>
        <begin position="25"/>
        <end position="44"/>
    </location>
</feature>
<feature type="peptide" id="PRO_0000440221" description="Chassatide C2" evidence="2 3">
    <location>
        <begin position="45"/>
        <end position="75"/>
    </location>
</feature>
<feature type="propeptide" id="PRO_0000440222" description="Removed in mature form" evidence="6">
    <location>
        <begin position="76"/>
        <end position="77"/>
    </location>
</feature>
<feature type="modified residue" description="Methionine sulfoxide; in form chassatide chaC2A" evidence="3">
    <location>
        <position position="63"/>
    </location>
</feature>
<feature type="disulfide bond" evidence="2">
    <location>
        <begin position="48"/>
        <end position="65"/>
    </location>
</feature>
<feature type="disulfide bond" evidence="2">
    <location>
        <begin position="52"/>
        <end position="67"/>
    </location>
</feature>
<feature type="disulfide bond" evidence="2">
    <location>
        <begin position="57"/>
        <end position="72"/>
    </location>
</feature>
<feature type="cross-link" description="Cyclopeptide (Gly-Asn)" evidence="3">
    <location>
        <begin position="45"/>
        <end position="75"/>
    </location>
</feature>